<gene>
    <name type="primary">dgkA</name>
    <name type="synonym">dgk</name>
    <name type="synonym">yqxF</name>
    <name type="ordered locus">BSU25310</name>
</gene>
<sequence>MDSKDHRNELNRFFKSFVHAGRGIWETARTERNFQFHAAAACAVLICGFLVELSIIEWMIIFLLIGGMFSLELLNTAIEHTVDLITDKHHPLAKAAKDAAAGAVCVFAVISCIIGLLIFLPKL</sequence>
<dbReference type="EC" id="2.7.1.66"/>
<dbReference type="EMBL" id="U29177">
    <property type="protein sequence ID" value="AAA70044.1"/>
    <property type="status" value="ALT_INIT"/>
    <property type="molecule type" value="Genomic_DNA"/>
</dbReference>
<dbReference type="EMBL" id="D84432">
    <property type="protein sequence ID" value="BAA12480.1"/>
    <property type="status" value="ALT_FRAME"/>
    <property type="molecule type" value="Genomic_DNA"/>
</dbReference>
<dbReference type="EMBL" id="AL009126">
    <property type="protein sequence ID" value="CAB14460.2"/>
    <property type="molecule type" value="Genomic_DNA"/>
</dbReference>
<dbReference type="EMBL" id="X17430">
    <property type="protein sequence ID" value="CAB57857.1"/>
    <property type="molecule type" value="Genomic_DNA"/>
</dbReference>
<dbReference type="PIR" id="G69614">
    <property type="entry name" value="G69614"/>
</dbReference>
<dbReference type="RefSeq" id="WP_004398824.1">
    <property type="nucleotide sequence ID" value="NZ_OZ025638.1"/>
</dbReference>
<dbReference type="SMR" id="P19638"/>
<dbReference type="FunCoup" id="P19638">
    <property type="interactions" value="79"/>
</dbReference>
<dbReference type="STRING" id="224308.BSU25310"/>
<dbReference type="SwissLipids" id="SLP:000001807"/>
<dbReference type="PaxDb" id="224308-BSU25310"/>
<dbReference type="EnsemblBacteria" id="CAB14460">
    <property type="protein sequence ID" value="CAB14460"/>
    <property type="gene ID" value="BSU_25310"/>
</dbReference>
<dbReference type="GeneID" id="937873"/>
<dbReference type="KEGG" id="bsu:BSU25310"/>
<dbReference type="PATRIC" id="fig|224308.179.peg.2751"/>
<dbReference type="eggNOG" id="COG0818">
    <property type="taxonomic scope" value="Bacteria"/>
</dbReference>
<dbReference type="InParanoid" id="P19638"/>
<dbReference type="OrthoDB" id="9789934at2"/>
<dbReference type="PhylomeDB" id="P19638"/>
<dbReference type="BioCyc" id="BSUB:BSU25310-MONOMER"/>
<dbReference type="BioCyc" id="MetaCyc:BSU25310-MONOMER"/>
<dbReference type="BRENDA" id="2.7.1.107">
    <property type="organism ID" value="658"/>
</dbReference>
<dbReference type="BRENDA" id="2.7.1.66">
    <property type="organism ID" value="658"/>
</dbReference>
<dbReference type="Proteomes" id="UP000001570">
    <property type="component" value="Chromosome"/>
</dbReference>
<dbReference type="GO" id="GO:0005886">
    <property type="term" value="C:plasma membrane"/>
    <property type="evidence" value="ECO:0000318"/>
    <property type="project" value="GO_Central"/>
</dbReference>
<dbReference type="GO" id="GO:0005524">
    <property type="term" value="F:ATP binding"/>
    <property type="evidence" value="ECO:0007669"/>
    <property type="project" value="UniProtKB-KW"/>
</dbReference>
<dbReference type="GO" id="GO:0036433">
    <property type="term" value="F:di-trans, poly-cis-undecaprenol kinase activity"/>
    <property type="evidence" value="ECO:0007669"/>
    <property type="project" value="UniProtKB-EC"/>
</dbReference>
<dbReference type="GO" id="GO:0001727">
    <property type="term" value="F:lipid kinase activity"/>
    <property type="evidence" value="ECO:0000318"/>
    <property type="project" value="GO_Central"/>
</dbReference>
<dbReference type="GO" id="GO:0008654">
    <property type="term" value="P:phospholipid biosynthetic process"/>
    <property type="evidence" value="ECO:0007669"/>
    <property type="project" value="UniProtKB-KW"/>
</dbReference>
<dbReference type="GO" id="GO:0030435">
    <property type="term" value="P:sporulation resulting in formation of a cellular spore"/>
    <property type="evidence" value="ECO:0007669"/>
    <property type="project" value="UniProtKB-KW"/>
</dbReference>
<dbReference type="CDD" id="cd14265">
    <property type="entry name" value="UDPK_IM_like"/>
    <property type="match status" value="1"/>
</dbReference>
<dbReference type="Gene3D" id="1.10.287.3610">
    <property type="match status" value="1"/>
</dbReference>
<dbReference type="InterPro" id="IPR000829">
    <property type="entry name" value="DAGK"/>
</dbReference>
<dbReference type="InterPro" id="IPR036945">
    <property type="entry name" value="DAGK_sf"/>
</dbReference>
<dbReference type="InterPro" id="IPR033717">
    <property type="entry name" value="UDPK"/>
</dbReference>
<dbReference type="PANTHER" id="PTHR34299">
    <property type="entry name" value="DIACYLGLYCEROL KINASE"/>
    <property type="match status" value="1"/>
</dbReference>
<dbReference type="PANTHER" id="PTHR34299:SF1">
    <property type="entry name" value="DIACYLGLYCEROL KINASE"/>
    <property type="match status" value="1"/>
</dbReference>
<dbReference type="Pfam" id="PF01219">
    <property type="entry name" value="DAGK_prokar"/>
    <property type="match status" value="1"/>
</dbReference>
<dbReference type="PROSITE" id="PS01069">
    <property type="entry name" value="DAGK_PROKAR"/>
    <property type="match status" value="1"/>
</dbReference>
<protein>
    <recommendedName>
        <fullName>Undecaprenol kinase</fullName>
        <shortName>UdpK</shortName>
        <ecNumber>2.7.1.66</ecNumber>
    </recommendedName>
</protein>
<organism>
    <name type="scientific">Bacillus subtilis (strain 168)</name>
    <dbReference type="NCBI Taxonomy" id="224308"/>
    <lineage>
        <taxon>Bacteria</taxon>
        <taxon>Bacillati</taxon>
        <taxon>Bacillota</taxon>
        <taxon>Bacilli</taxon>
        <taxon>Bacillales</taxon>
        <taxon>Bacillaceae</taxon>
        <taxon>Bacillus</taxon>
    </lineage>
</organism>
<name>UDPK_BACSU</name>
<feature type="chain" id="PRO_0000195259" description="Undecaprenol kinase">
    <location>
        <begin position="1"/>
        <end position="123"/>
    </location>
</feature>
<feature type="topological domain" description="Cytoplasmic" evidence="1">
    <location>
        <begin position="1"/>
        <end position="33"/>
    </location>
</feature>
<feature type="transmembrane region" description="Helical" evidence="1">
    <location>
        <begin position="34"/>
        <end position="51"/>
    </location>
</feature>
<feature type="topological domain" description="Extracellular" evidence="1">
    <location>
        <begin position="52"/>
        <end position="57"/>
    </location>
</feature>
<feature type="transmembrane region" description="Helical" evidence="1">
    <location>
        <begin position="58"/>
        <end position="74"/>
    </location>
</feature>
<feature type="topological domain" description="Cytoplasmic" evidence="1">
    <location>
        <begin position="75"/>
        <end position="99"/>
    </location>
</feature>
<feature type="transmembrane region" description="Helical" evidence="1">
    <location>
        <begin position="100"/>
        <end position="120"/>
    </location>
</feature>
<feature type="topological domain" description="Extracellular" evidence="1">
    <location>
        <begin position="121"/>
        <end position="123"/>
    </location>
</feature>
<feature type="sequence conflict" description="In Ref. 1; AAA70044." evidence="5" ref="1">
    <original>C</original>
    <variation>S</variation>
    <location>
        <position position="112"/>
    </location>
</feature>
<comment type="function">
    <text evidence="4">Catalyzes the phosphorylation of undecaprenol in vitro, which is probably the physiological substrate. Exhibits no detectable activity against other substrates such as monoacylglycerol, ceramide, or diacylglycerol (DAG). Appears indispensable for the maintenance of spore stability and viability in B.subtilis.</text>
</comment>
<comment type="catalytic activity">
    <reaction evidence="4">
        <text>di-trans,octa-cis-undecaprenol + ATP = di-trans,octa-cis-undecaprenyl phosphate + ADP + H(+)</text>
        <dbReference type="Rhea" id="RHEA:28122"/>
        <dbReference type="ChEBI" id="CHEBI:15378"/>
        <dbReference type="ChEBI" id="CHEBI:30616"/>
        <dbReference type="ChEBI" id="CHEBI:60392"/>
        <dbReference type="ChEBI" id="CHEBI:61216"/>
        <dbReference type="ChEBI" id="CHEBI:456216"/>
        <dbReference type="EC" id="2.7.1.66"/>
    </reaction>
</comment>
<comment type="subcellular location">
    <subcellularLocation>
        <location evidence="5">Cell membrane</location>
        <topology evidence="5">Multi-pass membrane protein</topology>
    </subcellularLocation>
    <text evidence="3">Localized in both lateral and septal membranes.</text>
</comment>
<comment type="induction">
    <text evidence="2">Mainly expressed during the vegetative phase of growth.</text>
</comment>
<comment type="disruption phenotype">
    <text evidence="2">Cells lacking this gene exhibit an abnormal cortex structure in mutant endospores 6 hours after the onset of sporulation, an indication of cortex degeneration. In addition, they display a significant decrease in the dipicolinic acid content of mutant spores.</text>
</comment>
<comment type="similarity">
    <text evidence="5">Belongs to the bacterial diacylglycerol kinase family.</text>
</comment>
<comment type="caution">
    <text evidence="6">Was originally thought to be a diacylglycerol kinase.</text>
</comment>
<comment type="sequence caution" evidence="5">
    <conflict type="erroneous initiation">
        <sequence resource="EMBL-CDS" id="AAA70044"/>
    </conflict>
    <text>Extended N-terminus.</text>
</comment>
<comment type="sequence caution" evidence="5">
    <conflict type="frameshift">
        <sequence resource="EMBL-CDS" id="BAA12480"/>
    </conflict>
</comment>
<reference key="1">
    <citation type="submission" date="1995-07" db="EMBL/GenBank/DDBJ databases">
        <title>Nucleotide sequence upstream of the cdd locus in Bacillus subtilis.</title>
        <authorList>
            <person name="Kim K."/>
            <person name="Hwang S."/>
            <person name="Suh J."/>
            <person name="Song B.-H."/>
            <person name="Hong S."/>
            <person name="Kim J."/>
        </authorList>
    </citation>
    <scope>NUCLEOTIDE SEQUENCE [GENOMIC DNA]</scope>
    <source>
        <strain>ED40</strain>
    </source>
</reference>
<reference key="2">
    <citation type="journal article" date="1996" name="Microbiology">
        <title>Systematic sequencing of the 283 kb 210 degrees-232 degrees region of the Bacillus subtilis genome containing the skin element and many sporulation genes.</title>
        <authorList>
            <person name="Mizuno M."/>
            <person name="Masuda S."/>
            <person name="Takemaru K."/>
            <person name="Hosono S."/>
            <person name="Sato T."/>
            <person name="Takeuchi M."/>
            <person name="Kobayashi Y."/>
        </authorList>
    </citation>
    <scope>NUCLEOTIDE SEQUENCE [GENOMIC DNA]</scope>
    <source>
        <strain>168 / JH642</strain>
    </source>
</reference>
<reference key="3">
    <citation type="journal article" date="1997" name="Nature">
        <title>The complete genome sequence of the Gram-positive bacterium Bacillus subtilis.</title>
        <authorList>
            <person name="Kunst F."/>
            <person name="Ogasawara N."/>
            <person name="Moszer I."/>
            <person name="Albertini A.M."/>
            <person name="Alloni G."/>
            <person name="Azevedo V."/>
            <person name="Bertero M.G."/>
            <person name="Bessieres P."/>
            <person name="Bolotin A."/>
            <person name="Borchert S."/>
            <person name="Borriss R."/>
            <person name="Boursier L."/>
            <person name="Brans A."/>
            <person name="Braun M."/>
            <person name="Brignell S.C."/>
            <person name="Bron S."/>
            <person name="Brouillet S."/>
            <person name="Bruschi C.V."/>
            <person name="Caldwell B."/>
            <person name="Capuano V."/>
            <person name="Carter N.M."/>
            <person name="Choi S.-K."/>
            <person name="Codani J.-J."/>
            <person name="Connerton I.F."/>
            <person name="Cummings N.J."/>
            <person name="Daniel R.A."/>
            <person name="Denizot F."/>
            <person name="Devine K.M."/>
            <person name="Duesterhoeft A."/>
            <person name="Ehrlich S.D."/>
            <person name="Emmerson P.T."/>
            <person name="Entian K.-D."/>
            <person name="Errington J."/>
            <person name="Fabret C."/>
            <person name="Ferrari E."/>
            <person name="Foulger D."/>
            <person name="Fritz C."/>
            <person name="Fujita M."/>
            <person name="Fujita Y."/>
            <person name="Fuma S."/>
            <person name="Galizzi A."/>
            <person name="Galleron N."/>
            <person name="Ghim S.-Y."/>
            <person name="Glaser P."/>
            <person name="Goffeau A."/>
            <person name="Golightly E.J."/>
            <person name="Grandi G."/>
            <person name="Guiseppi G."/>
            <person name="Guy B.J."/>
            <person name="Haga K."/>
            <person name="Haiech J."/>
            <person name="Harwood C.R."/>
            <person name="Henaut A."/>
            <person name="Hilbert H."/>
            <person name="Holsappel S."/>
            <person name="Hosono S."/>
            <person name="Hullo M.-F."/>
            <person name="Itaya M."/>
            <person name="Jones L.-M."/>
            <person name="Joris B."/>
            <person name="Karamata D."/>
            <person name="Kasahara Y."/>
            <person name="Klaerr-Blanchard M."/>
            <person name="Klein C."/>
            <person name="Kobayashi Y."/>
            <person name="Koetter P."/>
            <person name="Koningstein G."/>
            <person name="Krogh S."/>
            <person name="Kumano M."/>
            <person name="Kurita K."/>
            <person name="Lapidus A."/>
            <person name="Lardinois S."/>
            <person name="Lauber J."/>
            <person name="Lazarevic V."/>
            <person name="Lee S.-M."/>
            <person name="Levine A."/>
            <person name="Liu H."/>
            <person name="Masuda S."/>
            <person name="Mauel C."/>
            <person name="Medigue C."/>
            <person name="Medina N."/>
            <person name="Mellado R.P."/>
            <person name="Mizuno M."/>
            <person name="Moestl D."/>
            <person name="Nakai S."/>
            <person name="Noback M."/>
            <person name="Noone D."/>
            <person name="O'Reilly M."/>
            <person name="Ogawa K."/>
            <person name="Ogiwara A."/>
            <person name="Oudega B."/>
            <person name="Park S.-H."/>
            <person name="Parro V."/>
            <person name="Pohl T.M."/>
            <person name="Portetelle D."/>
            <person name="Porwollik S."/>
            <person name="Prescott A.M."/>
            <person name="Presecan E."/>
            <person name="Pujic P."/>
            <person name="Purnelle B."/>
            <person name="Rapoport G."/>
            <person name="Rey M."/>
            <person name="Reynolds S."/>
            <person name="Rieger M."/>
            <person name="Rivolta C."/>
            <person name="Rocha E."/>
            <person name="Roche B."/>
            <person name="Rose M."/>
            <person name="Sadaie Y."/>
            <person name="Sato T."/>
            <person name="Scanlan E."/>
            <person name="Schleich S."/>
            <person name="Schroeter R."/>
            <person name="Scoffone F."/>
            <person name="Sekiguchi J."/>
            <person name="Sekowska A."/>
            <person name="Seror S.J."/>
            <person name="Serror P."/>
            <person name="Shin B.-S."/>
            <person name="Soldo B."/>
            <person name="Sorokin A."/>
            <person name="Tacconi E."/>
            <person name="Takagi T."/>
            <person name="Takahashi H."/>
            <person name="Takemaru K."/>
            <person name="Takeuchi M."/>
            <person name="Tamakoshi A."/>
            <person name="Tanaka T."/>
            <person name="Terpstra P."/>
            <person name="Tognoni A."/>
            <person name="Tosato V."/>
            <person name="Uchiyama S."/>
            <person name="Vandenbol M."/>
            <person name="Vannier F."/>
            <person name="Vassarotti A."/>
            <person name="Viari A."/>
            <person name="Wambutt R."/>
            <person name="Wedler E."/>
            <person name="Wedler H."/>
            <person name="Weitzenegger T."/>
            <person name="Winters P."/>
            <person name="Wipat A."/>
            <person name="Yamamoto H."/>
            <person name="Yamane K."/>
            <person name="Yasumoto K."/>
            <person name="Yata K."/>
            <person name="Yoshida K."/>
            <person name="Yoshikawa H.-F."/>
            <person name="Zumstein E."/>
            <person name="Yoshikawa H."/>
            <person name="Danchin A."/>
        </authorList>
    </citation>
    <scope>NUCLEOTIDE SEQUENCE [LARGE SCALE GENOMIC DNA]</scope>
    <source>
        <strain>168</strain>
    </source>
</reference>
<reference key="4">
    <citation type="journal article" date="2009" name="Microbiology">
        <title>From a consortium sequence to a unified sequence: the Bacillus subtilis 168 reference genome a decade later.</title>
        <authorList>
            <person name="Barbe V."/>
            <person name="Cruveiller S."/>
            <person name="Kunst F."/>
            <person name="Lenoble P."/>
            <person name="Meurice G."/>
            <person name="Sekowska A."/>
            <person name="Vallenet D."/>
            <person name="Wang T."/>
            <person name="Moszer I."/>
            <person name="Medigue C."/>
            <person name="Danchin A."/>
        </authorList>
    </citation>
    <scope>SEQUENCE REVISION TO N-TERMINUS</scope>
</reference>
<reference key="5">
    <citation type="journal article" date="1989" name="Mol. Gen. Genet.">
        <title>Chromosomal location, cloning and nucleotide sequence of the Bacillus subtilis cdd gene encoding cytidine/deoxycytidine deaminase.</title>
        <authorList>
            <person name="Song B.-H."/>
            <person name="Neuhard J."/>
        </authorList>
    </citation>
    <scope>NUCLEOTIDE SEQUENCE [GENOMIC DNA] OF 12-123</scope>
    <source>
        <strain>168</strain>
    </source>
</reference>
<reference key="6">
    <citation type="journal article" date="1994" name="J. Bacteriol.">
        <title>Membrane topology of Escherichia coli diacylglycerol kinase.</title>
        <authorList>
            <person name="Smith R.L."/>
            <person name="O'Toole J.F."/>
            <person name="Maguire M.E."/>
            <person name="Sanders C.R. II"/>
        </authorList>
    </citation>
    <scope>IDENTIFICATION</scope>
</reference>
<reference key="7">
    <citation type="journal article" date="2003" name="J. Bacteriol.">
        <title>Bacillus subtilis diacylglycerol kinase (DgkA) enhances efficient sporulation.</title>
        <authorList>
            <person name="Amiteye S."/>
            <person name="Kobayashi K."/>
            <person name="Imamura D."/>
            <person name="Hosoya S."/>
            <person name="Ogasawara N."/>
            <person name="Sato T."/>
        </authorList>
    </citation>
    <scope>INDUCTION</scope>
    <scope>DISRUPTION PHENOTYPE</scope>
</reference>
<reference key="8">
    <citation type="journal article" date="2005" name="J. Bacteriol.">
        <title>Phosphatidylethanolamine domains and localization of phospholipid synthases in Bacillus subtilis membranes.</title>
        <authorList>
            <person name="Nishibori A."/>
            <person name="Kusaka J."/>
            <person name="Hara H."/>
            <person name="Umeda M."/>
            <person name="Matsumoto K."/>
        </authorList>
    </citation>
    <scope>SUBCELLULAR LOCATION</scope>
</reference>
<reference key="9">
    <citation type="journal article" date="2007" name="J. Biol. Chem.">
        <title>Identification of a soluble diacylglycerol kinase required for lipoteichoic acid production in Bacillus subtilis.</title>
        <authorList>
            <person name="Jerga A."/>
            <person name="Lu Y.-J."/>
            <person name="Schujman G.E."/>
            <person name="de Mendoza D."/>
            <person name="Rock C.O."/>
        </authorList>
    </citation>
    <scope>FUNCTION AS AN UNDECAPRENOL KINASE</scope>
    <scope>CATALYTIC ACTIVITY</scope>
    <scope>SUBSTRATE SPECIFICITY</scope>
</reference>
<keyword id="KW-0067">ATP-binding</keyword>
<keyword id="KW-1003">Cell membrane</keyword>
<keyword id="KW-0418">Kinase</keyword>
<keyword id="KW-0444">Lipid biosynthesis</keyword>
<keyword id="KW-0443">Lipid metabolism</keyword>
<keyword id="KW-0472">Membrane</keyword>
<keyword id="KW-0547">Nucleotide-binding</keyword>
<keyword id="KW-0594">Phospholipid biosynthesis</keyword>
<keyword id="KW-1208">Phospholipid metabolism</keyword>
<keyword id="KW-1185">Reference proteome</keyword>
<keyword id="KW-0749">Sporulation</keyword>
<keyword id="KW-0808">Transferase</keyword>
<keyword id="KW-0812">Transmembrane</keyword>
<keyword id="KW-1133">Transmembrane helix</keyword>
<accession>P19638</accession>
<evidence type="ECO:0000255" key="1"/>
<evidence type="ECO:0000269" key="2">
    <source>
    </source>
</evidence>
<evidence type="ECO:0000269" key="3">
    <source>
    </source>
</evidence>
<evidence type="ECO:0000269" key="4">
    <source>
    </source>
</evidence>
<evidence type="ECO:0000305" key="5"/>
<evidence type="ECO:0000305" key="6">
    <source>
    </source>
</evidence>
<proteinExistence type="evidence at protein level"/>